<evidence type="ECO:0000255" key="1">
    <source>
        <dbReference type="HAMAP-Rule" id="MF_01325"/>
    </source>
</evidence>
<evidence type="ECO:0000256" key="2">
    <source>
        <dbReference type="SAM" id="MobiDB-lite"/>
    </source>
</evidence>
<evidence type="ECO:0000305" key="3"/>
<dbReference type="EMBL" id="CP001252">
    <property type="protein sequence ID" value="ACK48529.1"/>
    <property type="molecule type" value="Genomic_DNA"/>
</dbReference>
<dbReference type="RefSeq" id="WP_006083600.1">
    <property type="nucleotide sequence ID" value="NC_011663.1"/>
</dbReference>
<dbReference type="SMR" id="B8EBK5"/>
<dbReference type="GeneID" id="11770559"/>
<dbReference type="KEGG" id="sbp:Sbal223_4056"/>
<dbReference type="HOGENOM" id="CLU_044142_4_1_6"/>
<dbReference type="Proteomes" id="UP000002507">
    <property type="component" value="Chromosome"/>
</dbReference>
<dbReference type="GO" id="GO:0022625">
    <property type="term" value="C:cytosolic large ribosomal subunit"/>
    <property type="evidence" value="ECO:0007669"/>
    <property type="project" value="TreeGrafter"/>
</dbReference>
<dbReference type="GO" id="GO:0019843">
    <property type="term" value="F:rRNA binding"/>
    <property type="evidence" value="ECO:0007669"/>
    <property type="project" value="UniProtKB-UniRule"/>
</dbReference>
<dbReference type="GO" id="GO:0003735">
    <property type="term" value="F:structural constituent of ribosome"/>
    <property type="evidence" value="ECO:0007669"/>
    <property type="project" value="InterPro"/>
</dbReference>
<dbReference type="GO" id="GO:0006412">
    <property type="term" value="P:translation"/>
    <property type="evidence" value="ECO:0007669"/>
    <property type="project" value="UniProtKB-UniRule"/>
</dbReference>
<dbReference type="FunFam" id="2.40.30.10:FF:000004">
    <property type="entry name" value="50S ribosomal protein L3"/>
    <property type="match status" value="1"/>
</dbReference>
<dbReference type="FunFam" id="3.30.160.810:FF:000001">
    <property type="entry name" value="50S ribosomal protein L3"/>
    <property type="match status" value="1"/>
</dbReference>
<dbReference type="Gene3D" id="3.30.160.810">
    <property type="match status" value="1"/>
</dbReference>
<dbReference type="Gene3D" id="2.40.30.10">
    <property type="entry name" value="Translation factors"/>
    <property type="match status" value="1"/>
</dbReference>
<dbReference type="HAMAP" id="MF_01325_B">
    <property type="entry name" value="Ribosomal_uL3_B"/>
    <property type="match status" value="1"/>
</dbReference>
<dbReference type="InterPro" id="IPR000597">
    <property type="entry name" value="Ribosomal_uL3"/>
</dbReference>
<dbReference type="InterPro" id="IPR019927">
    <property type="entry name" value="Ribosomal_uL3_bac/org-type"/>
</dbReference>
<dbReference type="InterPro" id="IPR019926">
    <property type="entry name" value="Ribosomal_uL3_CS"/>
</dbReference>
<dbReference type="InterPro" id="IPR009000">
    <property type="entry name" value="Transl_B-barrel_sf"/>
</dbReference>
<dbReference type="NCBIfam" id="TIGR03625">
    <property type="entry name" value="L3_bact"/>
    <property type="match status" value="1"/>
</dbReference>
<dbReference type="PANTHER" id="PTHR11229">
    <property type="entry name" value="50S RIBOSOMAL PROTEIN L3"/>
    <property type="match status" value="1"/>
</dbReference>
<dbReference type="PANTHER" id="PTHR11229:SF16">
    <property type="entry name" value="LARGE RIBOSOMAL SUBUNIT PROTEIN UL3C"/>
    <property type="match status" value="1"/>
</dbReference>
<dbReference type="Pfam" id="PF00297">
    <property type="entry name" value="Ribosomal_L3"/>
    <property type="match status" value="1"/>
</dbReference>
<dbReference type="SUPFAM" id="SSF50447">
    <property type="entry name" value="Translation proteins"/>
    <property type="match status" value="1"/>
</dbReference>
<dbReference type="PROSITE" id="PS00474">
    <property type="entry name" value="RIBOSOMAL_L3"/>
    <property type="match status" value="1"/>
</dbReference>
<feature type="chain" id="PRO_1000165902" description="Large ribosomal subunit protein uL3">
    <location>
        <begin position="1"/>
        <end position="212"/>
    </location>
</feature>
<feature type="region of interest" description="Disordered" evidence="2">
    <location>
        <begin position="136"/>
        <end position="155"/>
    </location>
</feature>
<feature type="modified residue" description="N5-methylglutamine" evidence="1">
    <location>
        <position position="153"/>
    </location>
</feature>
<organism>
    <name type="scientific">Shewanella baltica (strain OS223)</name>
    <dbReference type="NCBI Taxonomy" id="407976"/>
    <lineage>
        <taxon>Bacteria</taxon>
        <taxon>Pseudomonadati</taxon>
        <taxon>Pseudomonadota</taxon>
        <taxon>Gammaproteobacteria</taxon>
        <taxon>Alteromonadales</taxon>
        <taxon>Shewanellaceae</taxon>
        <taxon>Shewanella</taxon>
    </lineage>
</organism>
<accession>B8EBK5</accession>
<sequence>MAIGLIGRKVGMTRIFTEDGVSIPVTVIEVAGNRVTQVKTLETDGYRALQVTTGTKKANRITKPEAGHFAKSGVEAGRGLWEMRLVDGEGEGIEVGAELNVDIFADVAKVDVTGQSKGKGFQGGVKRWNFRTQDMTHGNSLSHRSNGSIGQNQTPGRVFKGKKMSGHMGAERVTTQNLVVVRVDVERNLLLVRGAVPGATNGDLIIKPAVKA</sequence>
<gene>
    <name evidence="1" type="primary">rplC</name>
    <name type="ordered locus">Sbal223_4056</name>
</gene>
<proteinExistence type="inferred from homology"/>
<protein>
    <recommendedName>
        <fullName evidence="1">Large ribosomal subunit protein uL3</fullName>
    </recommendedName>
    <alternativeName>
        <fullName evidence="3">50S ribosomal protein L3</fullName>
    </alternativeName>
</protein>
<keyword id="KW-0488">Methylation</keyword>
<keyword id="KW-0687">Ribonucleoprotein</keyword>
<keyword id="KW-0689">Ribosomal protein</keyword>
<keyword id="KW-0694">RNA-binding</keyword>
<keyword id="KW-0699">rRNA-binding</keyword>
<name>RL3_SHEB2</name>
<comment type="function">
    <text evidence="1">One of the primary rRNA binding proteins, it binds directly near the 3'-end of the 23S rRNA, where it nucleates assembly of the 50S subunit.</text>
</comment>
<comment type="subunit">
    <text evidence="1">Part of the 50S ribosomal subunit. Forms a cluster with proteins L14 and L19.</text>
</comment>
<comment type="PTM">
    <text evidence="1">Methylated by PrmB.</text>
</comment>
<comment type="similarity">
    <text evidence="1">Belongs to the universal ribosomal protein uL3 family.</text>
</comment>
<reference key="1">
    <citation type="submission" date="2008-12" db="EMBL/GenBank/DDBJ databases">
        <title>Complete sequence of chromosome of Shewanella baltica OS223.</title>
        <authorList>
            <consortium name="US DOE Joint Genome Institute"/>
            <person name="Lucas S."/>
            <person name="Copeland A."/>
            <person name="Lapidus A."/>
            <person name="Glavina del Rio T."/>
            <person name="Dalin E."/>
            <person name="Tice H."/>
            <person name="Bruce D."/>
            <person name="Goodwin L."/>
            <person name="Pitluck S."/>
            <person name="Chertkov O."/>
            <person name="Meincke L."/>
            <person name="Brettin T."/>
            <person name="Detter J.C."/>
            <person name="Han C."/>
            <person name="Kuske C.R."/>
            <person name="Larimer F."/>
            <person name="Land M."/>
            <person name="Hauser L."/>
            <person name="Kyrpides N."/>
            <person name="Ovchinnikova G."/>
            <person name="Brettar I."/>
            <person name="Rodrigues J."/>
            <person name="Konstantinidis K."/>
            <person name="Tiedje J."/>
        </authorList>
    </citation>
    <scope>NUCLEOTIDE SEQUENCE [LARGE SCALE GENOMIC DNA]</scope>
    <source>
        <strain>OS223</strain>
    </source>
</reference>